<name>GLMU_COREF</name>
<proteinExistence type="inferred from homology"/>
<keyword id="KW-0012">Acyltransferase</keyword>
<keyword id="KW-0133">Cell shape</keyword>
<keyword id="KW-0961">Cell wall biogenesis/degradation</keyword>
<keyword id="KW-0963">Cytoplasm</keyword>
<keyword id="KW-0460">Magnesium</keyword>
<keyword id="KW-0479">Metal-binding</keyword>
<keyword id="KW-0511">Multifunctional enzyme</keyword>
<keyword id="KW-0548">Nucleotidyltransferase</keyword>
<keyword id="KW-0573">Peptidoglycan synthesis</keyword>
<keyword id="KW-1185">Reference proteome</keyword>
<keyword id="KW-0677">Repeat</keyword>
<keyword id="KW-0808">Transferase</keyword>
<sequence>MSASDSSSAVVVLAAGAGTRMKSDLQKTLHSIGGRSLISHSLHAAAGLNPTHIVAVIGHGRDQVGPAVEDVATHLGREVRIAIQEEQNGTGHAVQCAMDQLEGFDGTIIVTNGDVPLLTSDTLGSLLAAHTATPTAVTVLTMNLDDPTGYGRIVRNADGEVTAIVEQKDASDEERSITEVNSGVFAFDATILRSALSQLKSDNAQGELYLTDVLGIARSEGHPVRAHIAADARELAGVNDRVQLAEAGAELNRRTVEAAMRGGATIVDPATTWIDVEVTIGRDVLINPGTQLRGTTSIGDRAEIGPDTTLTNMVIGTGASVIRTHGSDSEIGEDATVGPFTYIRPGTKLGAEGKLGGFVETKKATIGRGSKVPHLTYVGDATIGEYSNIGASSVFVNYDGVNKNHTTIGSHVRTGSDTMFIAPVTVGDGAYSGAGTVIKDDVPPGALAVSGGRQRNIEGWVQKKRPGTAAADAAAAAQNSVPNQEG</sequence>
<accession>Q8FQV1</accession>
<organism>
    <name type="scientific">Corynebacterium efficiens (strain DSM 44549 / YS-314 / AJ 12310 / JCM 11189 / NBRC 100395)</name>
    <dbReference type="NCBI Taxonomy" id="196164"/>
    <lineage>
        <taxon>Bacteria</taxon>
        <taxon>Bacillati</taxon>
        <taxon>Actinomycetota</taxon>
        <taxon>Actinomycetes</taxon>
        <taxon>Mycobacteriales</taxon>
        <taxon>Corynebacteriaceae</taxon>
        <taxon>Corynebacterium</taxon>
    </lineage>
</organism>
<dbReference type="EC" id="2.7.7.23" evidence="1"/>
<dbReference type="EC" id="2.3.1.157" evidence="1"/>
<dbReference type="EMBL" id="BA000035">
    <property type="protein sequence ID" value="BAC17826.1"/>
    <property type="status" value="ALT_INIT"/>
    <property type="molecule type" value="Genomic_DNA"/>
</dbReference>
<dbReference type="RefSeq" id="WP_035109878.1">
    <property type="nucleotide sequence ID" value="NC_004369.1"/>
</dbReference>
<dbReference type="SMR" id="Q8FQV1"/>
<dbReference type="STRING" id="196164.gene:10741422"/>
<dbReference type="KEGG" id="cef:CE1016"/>
<dbReference type="eggNOG" id="COG1207">
    <property type="taxonomic scope" value="Bacteria"/>
</dbReference>
<dbReference type="HOGENOM" id="CLU_029499_15_2_11"/>
<dbReference type="OrthoDB" id="9775031at2"/>
<dbReference type="UniPathway" id="UPA00113">
    <property type="reaction ID" value="UER00532"/>
</dbReference>
<dbReference type="UniPathway" id="UPA00113">
    <property type="reaction ID" value="UER00533"/>
</dbReference>
<dbReference type="UniPathway" id="UPA00973"/>
<dbReference type="Proteomes" id="UP000001409">
    <property type="component" value="Chromosome"/>
</dbReference>
<dbReference type="GO" id="GO:0005737">
    <property type="term" value="C:cytoplasm"/>
    <property type="evidence" value="ECO:0007669"/>
    <property type="project" value="UniProtKB-SubCell"/>
</dbReference>
<dbReference type="GO" id="GO:0016020">
    <property type="term" value="C:membrane"/>
    <property type="evidence" value="ECO:0007669"/>
    <property type="project" value="GOC"/>
</dbReference>
<dbReference type="GO" id="GO:0019134">
    <property type="term" value="F:glucosamine-1-phosphate N-acetyltransferase activity"/>
    <property type="evidence" value="ECO:0007669"/>
    <property type="project" value="UniProtKB-UniRule"/>
</dbReference>
<dbReference type="GO" id="GO:0000287">
    <property type="term" value="F:magnesium ion binding"/>
    <property type="evidence" value="ECO:0007669"/>
    <property type="project" value="UniProtKB-UniRule"/>
</dbReference>
<dbReference type="GO" id="GO:0003977">
    <property type="term" value="F:UDP-N-acetylglucosamine diphosphorylase activity"/>
    <property type="evidence" value="ECO:0007669"/>
    <property type="project" value="UniProtKB-UniRule"/>
</dbReference>
<dbReference type="GO" id="GO:0000902">
    <property type="term" value="P:cell morphogenesis"/>
    <property type="evidence" value="ECO:0007669"/>
    <property type="project" value="UniProtKB-UniRule"/>
</dbReference>
<dbReference type="GO" id="GO:0071555">
    <property type="term" value="P:cell wall organization"/>
    <property type="evidence" value="ECO:0007669"/>
    <property type="project" value="UniProtKB-KW"/>
</dbReference>
<dbReference type="GO" id="GO:0009245">
    <property type="term" value="P:lipid A biosynthetic process"/>
    <property type="evidence" value="ECO:0007669"/>
    <property type="project" value="UniProtKB-UniRule"/>
</dbReference>
<dbReference type="GO" id="GO:0009252">
    <property type="term" value="P:peptidoglycan biosynthetic process"/>
    <property type="evidence" value="ECO:0007669"/>
    <property type="project" value="UniProtKB-UniRule"/>
</dbReference>
<dbReference type="GO" id="GO:0008360">
    <property type="term" value="P:regulation of cell shape"/>
    <property type="evidence" value="ECO:0007669"/>
    <property type="project" value="UniProtKB-KW"/>
</dbReference>
<dbReference type="GO" id="GO:0006048">
    <property type="term" value="P:UDP-N-acetylglucosamine biosynthetic process"/>
    <property type="evidence" value="ECO:0007669"/>
    <property type="project" value="UniProtKB-UniPathway"/>
</dbReference>
<dbReference type="CDD" id="cd02540">
    <property type="entry name" value="GT2_GlmU_N_bac"/>
    <property type="match status" value="1"/>
</dbReference>
<dbReference type="CDD" id="cd03353">
    <property type="entry name" value="LbH_GlmU_C"/>
    <property type="match status" value="1"/>
</dbReference>
<dbReference type="Gene3D" id="2.160.10.10">
    <property type="entry name" value="Hexapeptide repeat proteins"/>
    <property type="match status" value="1"/>
</dbReference>
<dbReference type="Gene3D" id="3.90.550.10">
    <property type="entry name" value="Spore Coat Polysaccharide Biosynthesis Protein SpsA, Chain A"/>
    <property type="match status" value="1"/>
</dbReference>
<dbReference type="HAMAP" id="MF_01631">
    <property type="entry name" value="GlmU"/>
    <property type="match status" value="1"/>
</dbReference>
<dbReference type="InterPro" id="IPR005882">
    <property type="entry name" value="Bifunctional_GlmU"/>
</dbReference>
<dbReference type="InterPro" id="IPR050065">
    <property type="entry name" value="GlmU-like"/>
</dbReference>
<dbReference type="InterPro" id="IPR038009">
    <property type="entry name" value="GlmU_C_LbH"/>
</dbReference>
<dbReference type="InterPro" id="IPR001451">
    <property type="entry name" value="Hexapep"/>
</dbReference>
<dbReference type="InterPro" id="IPR025877">
    <property type="entry name" value="MobA-like_NTP_Trfase"/>
</dbReference>
<dbReference type="InterPro" id="IPR029044">
    <property type="entry name" value="Nucleotide-diphossugar_trans"/>
</dbReference>
<dbReference type="InterPro" id="IPR011004">
    <property type="entry name" value="Trimer_LpxA-like_sf"/>
</dbReference>
<dbReference type="NCBIfam" id="TIGR01173">
    <property type="entry name" value="glmU"/>
    <property type="match status" value="1"/>
</dbReference>
<dbReference type="NCBIfam" id="NF010932">
    <property type="entry name" value="PRK14352.1"/>
    <property type="match status" value="1"/>
</dbReference>
<dbReference type="PANTHER" id="PTHR43584:SF3">
    <property type="entry name" value="BIFUNCTIONAL PROTEIN GLMU"/>
    <property type="match status" value="1"/>
</dbReference>
<dbReference type="PANTHER" id="PTHR43584">
    <property type="entry name" value="NUCLEOTIDYL TRANSFERASE"/>
    <property type="match status" value="1"/>
</dbReference>
<dbReference type="Pfam" id="PF00132">
    <property type="entry name" value="Hexapep"/>
    <property type="match status" value="1"/>
</dbReference>
<dbReference type="Pfam" id="PF12804">
    <property type="entry name" value="NTP_transf_3"/>
    <property type="match status" value="1"/>
</dbReference>
<dbReference type="SUPFAM" id="SSF53448">
    <property type="entry name" value="Nucleotide-diphospho-sugar transferases"/>
    <property type="match status" value="1"/>
</dbReference>
<dbReference type="SUPFAM" id="SSF51161">
    <property type="entry name" value="Trimeric LpxA-like enzymes"/>
    <property type="match status" value="1"/>
</dbReference>
<reference key="1">
    <citation type="journal article" date="2003" name="Genome Res.">
        <title>Comparative complete genome sequence analysis of the amino acid replacements responsible for the thermostability of Corynebacterium efficiens.</title>
        <authorList>
            <person name="Nishio Y."/>
            <person name="Nakamura Y."/>
            <person name="Kawarabayasi Y."/>
            <person name="Usuda Y."/>
            <person name="Kimura E."/>
            <person name="Sugimoto S."/>
            <person name="Matsui K."/>
            <person name="Yamagishi A."/>
            <person name="Kikuchi H."/>
            <person name="Ikeo K."/>
            <person name="Gojobori T."/>
        </authorList>
    </citation>
    <scope>NUCLEOTIDE SEQUENCE [LARGE SCALE GENOMIC DNA]</scope>
    <source>
        <strain>DSM 44549 / YS-314 / AJ 12310 / JCM 11189 / NBRC 100395</strain>
    </source>
</reference>
<feature type="chain" id="PRO_0000233761" description="Bifunctional protein GlmU">
    <location>
        <begin position="1"/>
        <end position="486"/>
    </location>
</feature>
<feature type="region of interest" description="Pyrophosphorylase" evidence="1">
    <location>
        <begin position="1"/>
        <end position="241"/>
    </location>
</feature>
<feature type="region of interest" description="Linker" evidence="1">
    <location>
        <begin position="242"/>
        <end position="262"/>
    </location>
</feature>
<feature type="region of interest" description="N-acetyltransferase" evidence="1">
    <location>
        <begin position="263"/>
        <end position="486"/>
    </location>
</feature>
<feature type="region of interest" description="Disordered" evidence="2">
    <location>
        <begin position="464"/>
        <end position="486"/>
    </location>
</feature>
<feature type="active site" description="Proton acceptor" evidence="1">
    <location>
        <position position="374"/>
    </location>
</feature>
<feature type="binding site" evidence="1">
    <location>
        <begin position="13"/>
        <end position="16"/>
    </location>
    <ligand>
        <name>UDP-N-acetyl-alpha-D-glucosamine</name>
        <dbReference type="ChEBI" id="CHEBI:57705"/>
    </ligand>
</feature>
<feature type="binding site" evidence="1">
    <location>
        <position position="27"/>
    </location>
    <ligand>
        <name>UDP-N-acetyl-alpha-D-glucosamine</name>
        <dbReference type="ChEBI" id="CHEBI:57705"/>
    </ligand>
</feature>
<feature type="binding site" evidence="1">
    <location>
        <position position="84"/>
    </location>
    <ligand>
        <name>UDP-N-acetyl-alpha-D-glucosamine</name>
        <dbReference type="ChEBI" id="CHEBI:57705"/>
    </ligand>
</feature>
<feature type="binding site" evidence="1">
    <location>
        <begin position="89"/>
        <end position="90"/>
    </location>
    <ligand>
        <name>UDP-N-acetyl-alpha-D-glucosamine</name>
        <dbReference type="ChEBI" id="CHEBI:57705"/>
    </ligand>
</feature>
<feature type="binding site" evidence="1">
    <location>
        <position position="114"/>
    </location>
    <ligand>
        <name>Mg(2+)</name>
        <dbReference type="ChEBI" id="CHEBI:18420"/>
    </ligand>
</feature>
<feature type="binding site" evidence="1">
    <location>
        <position position="151"/>
    </location>
    <ligand>
        <name>UDP-N-acetyl-alpha-D-glucosamine</name>
        <dbReference type="ChEBI" id="CHEBI:57705"/>
    </ligand>
</feature>
<feature type="binding site" evidence="1">
    <location>
        <position position="166"/>
    </location>
    <ligand>
        <name>UDP-N-acetyl-alpha-D-glucosamine</name>
        <dbReference type="ChEBI" id="CHEBI:57705"/>
    </ligand>
</feature>
<feature type="binding site" evidence="1">
    <location>
        <position position="181"/>
    </location>
    <ligand>
        <name>UDP-N-acetyl-alpha-D-glucosamine</name>
        <dbReference type="ChEBI" id="CHEBI:57705"/>
    </ligand>
</feature>
<feature type="binding site" evidence="1">
    <location>
        <position position="239"/>
    </location>
    <ligand>
        <name>Mg(2+)</name>
        <dbReference type="ChEBI" id="CHEBI:18420"/>
    </ligand>
</feature>
<feature type="binding site" evidence="1">
    <location>
        <position position="239"/>
    </location>
    <ligand>
        <name>UDP-N-acetyl-alpha-D-glucosamine</name>
        <dbReference type="ChEBI" id="CHEBI:57705"/>
    </ligand>
</feature>
<feature type="binding site" evidence="1">
    <location>
        <position position="344"/>
    </location>
    <ligand>
        <name>UDP-N-acetyl-alpha-D-glucosamine</name>
        <dbReference type="ChEBI" id="CHEBI:57705"/>
    </ligand>
</feature>
<feature type="binding site" evidence="1">
    <location>
        <position position="362"/>
    </location>
    <ligand>
        <name>UDP-N-acetyl-alpha-D-glucosamine</name>
        <dbReference type="ChEBI" id="CHEBI:57705"/>
    </ligand>
</feature>
<feature type="binding site" evidence="1">
    <location>
        <position position="377"/>
    </location>
    <ligand>
        <name>UDP-N-acetyl-alpha-D-glucosamine</name>
        <dbReference type="ChEBI" id="CHEBI:57705"/>
    </ligand>
</feature>
<feature type="binding site" evidence="1">
    <location>
        <position position="388"/>
    </location>
    <ligand>
        <name>UDP-N-acetyl-alpha-D-glucosamine</name>
        <dbReference type="ChEBI" id="CHEBI:57705"/>
    </ligand>
</feature>
<feature type="binding site" evidence="1">
    <location>
        <position position="391"/>
    </location>
    <ligand>
        <name>acetyl-CoA</name>
        <dbReference type="ChEBI" id="CHEBI:57288"/>
    </ligand>
</feature>
<feature type="binding site" evidence="1">
    <location>
        <begin position="397"/>
        <end position="398"/>
    </location>
    <ligand>
        <name>acetyl-CoA</name>
        <dbReference type="ChEBI" id="CHEBI:57288"/>
    </ligand>
</feature>
<feature type="binding site" evidence="1">
    <location>
        <position position="416"/>
    </location>
    <ligand>
        <name>acetyl-CoA</name>
        <dbReference type="ChEBI" id="CHEBI:57288"/>
    </ligand>
</feature>
<feature type="binding site" evidence="1">
    <location>
        <position position="434"/>
    </location>
    <ligand>
        <name>acetyl-CoA</name>
        <dbReference type="ChEBI" id="CHEBI:57288"/>
    </ligand>
</feature>
<gene>
    <name evidence="1" type="primary">glmU</name>
    <name type="ordered locus">CE1016</name>
</gene>
<protein>
    <recommendedName>
        <fullName evidence="1">Bifunctional protein GlmU</fullName>
    </recommendedName>
    <domain>
        <recommendedName>
            <fullName evidence="1">UDP-N-acetylglucosamine pyrophosphorylase</fullName>
            <ecNumber evidence="1">2.7.7.23</ecNumber>
        </recommendedName>
        <alternativeName>
            <fullName evidence="1">N-acetylglucosamine-1-phosphate uridyltransferase</fullName>
        </alternativeName>
    </domain>
    <domain>
        <recommendedName>
            <fullName evidence="1">Glucosamine-1-phosphate N-acetyltransferase</fullName>
            <ecNumber evidence="1">2.3.1.157</ecNumber>
        </recommendedName>
    </domain>
</protein>
<comment type="function">
    <text evidence="1">Catalyzes the last two sequential reactions in the de novo biosynthetic pathway for UDP-N-acetylglucosamine (UDP-GlcNAc). The C-terminal domain catalyzes the transfer of acetyl group from acetyl coenzyme A to glucosamine-1-phosphate (GlcN-1-P) to produce N-acetylglucosamine-1-phosphate (GlcNAc-1-P), which is converted into UDP-GlcNAc by the transfer of uridine 5-monophosphate (from uridine 5-triphosphate), a reaction catalyzed by the N-terminal domain.</text>
</comment>
<comment type="catalytic activity">
    <reaction evidence="1">
        <text>alpha-D-glucosamine 1-phosphate + acetyl-CoA = N-acetyl-alpha-D-glucosamine 1-phosphate + CoA + H(+)</text>
        <dbReference type="Rhea" id="RHEA:13725"/>
        <dbReference type="ChEBI" id="CHEBI:15378"/>
        <dbReference type="ChEBI" id="CHEBI:57287"/>
        <dbReference type="ChEBI" id="CHEBI:57288"/>
        <dbReference type="ChEBI" id="CHEBI:57776"/>
        <dbReference type="ChEBI" id="CHEBI:58516"/>
        <dbReference type="EC" id="2.3.1.157"/>
    </reaction>
</comment>
<comment type="catalytic activity">
    <reaction evidence="1">
        <text>N-acetyl-alpha-D-glucosamine 1-phosphate + UTP + H(+) = UDP-N-acetyl-alpha-D-glucosamine + diphosphate</text>
        <dbReference type="Rhea" id="RHEA:13509"/>
        <dbReference type="ChEBI" id="CHEBI:15378"/>
        <dbReference type="ChEBI" id="CHEBI:33019"/>
        <dbReference type="ChEBI" id="CHEBI:46398"/>
        <dbReference type="ChEBI" id="CHEBI:57705"/>
        <dbReference type="ChEBI" id="CHEBI:57776"/>
        <dbReference type="EC" id="2.7.7.23"/>
    </reaction>
</comment>
<comment type="cofactor">
    <cofactor evidence="1">
        <name>Mg(2+)</name>
        <dbReference type="ChEBI" id="CHEBI:18420"/>
    </cofactor>
    <text evidence="1">Binds 1 Mg(2+) ion per subunit.</text>
</comment>
<comment type="pathway">
    <text evidence="1">Nucleotide-sugar biosynthesis; UDP-N-acetyl-alpha-D-glucosamine biosynthesis; N-acetyl-alpha-D-glucosamine 1-phosphate from alpha-D-glucosamine 6-phosphate (route II): step 2/2.</text>
</comment>
<comment type="pathway">
    <text evidence="1">Nucleotide-sugar biosynthesis; UDP-N-acetyl-alpha-D-glucosamine biosynthesis; UDP-N-acetyl-alpha-D-glucosamine from N-acetyl-alpha-D-glucosamine 1-phosphate: step 1/1.</text>
</comment>
<comment type="pathway">
    <text evidence="1">Bacterial outer membrane biogenesis; LPS lipid A biosynthesis.</text>
</comment>
<comment type="subunit">
    <text evidence="1">Homotrimer.</text>
</comment>
<comment type="subcellular location">
    <subcellularLocation>
        <location evidence="1">Cytoplasm</location>
    </subcellularLocation>
</comment>
<comment type="similarity">
    <text evidence="1">In the N-terminal section; belongs to the N-acetylglucosamine-1-phosphate uridyltransferase family.</text>
</comment>
<comment type="similarity">
    <text evidence="1">In the C-terminal section; belongs to the transferase hexapeptide repeat family.</text>
</comment>
<comment type="sequence caution" evidence="3">
    <conflict type="erroneous initiation">
        <sequence resource="EMBL-CDS" id="BAC17826"/>
    </conflict>
</comment>
<evidence type="ECO:0000255" key="1">
    <source>
        <dbReference type="HAMAP-Rule" id="MF_01631"/>
    </source>
</evidence>
<evidence type="ECO:0000256" key="2">
    <source>
        <dbReference type="SAM" id="MobiDB-lite"/>
    </source>
</evidence>
<evidence type="ECO:0000305" key="3"/>